<comment type="function">
    <text>FABPs are thought to play a role in the intracellular transport of long-chain fatty acids and their acyl-CoA esters. FABPs are important elements related to the hibernating state in mammals.</text>
</comment>
<comment type="subcellular location">
    <subcellularLocation>
        <location>Cytoplasm</location>
    </subcellularLocation>
</comment>
<comment type="induction">
    <text>Up-regulated during hibernation in brown adipose tissue and skeletal muscle compared with levels in euthermic bats.</text>
</comment>
<comment type="domain">
    <text evidence="1">Forms a beta-barrel structure that accommodates the hydrophobic ligand in its interior.</text>
</comment>
<comment type="similarity">
    <text evidence="4">Belongs to the calycin superfamily. Fatty-acid binding protein (FABP) family.</text>
</comment>
<accession>Q865F7</accession>
<reference key="1">
    <citation type="journal article" date="2004" name="Biochim. Biophys. Acta">
        <title>Up-regulation of fatty acid-binding proteins during hibernation in the little brown bat, Myotis lucifugus.</title>
        <authorList>
            <person name="Eddy S.F."/>
            <person name="Storey K.B."/>
        </authorList>
    </citation>
    <scope>NUCLEOTIDE SEQUENCE [MRNA]</scope>
</reference>
<proteinExistence type="evidence at transcript level"/>
<gene>
    <name type="primary">FABP3</name>
</gene>
<dbReference type="EMBL" id="AF530469">
    <property type="protein sequence ID" value="AAO49500.1"/>
    <property type="molecule type" value="mRNA"/>
</dbReference>
<dbReference type="RefSeq" id="NP_001273948.1">
    <property type="nucleotide sequence ID" value="NM_001287019.1"/>
</dbReference>
<dbReference type="SMR" id="Q865F7"/>
<dbReference type="FunCoup" id="Q865F7">
    <property type="interactions" value="302"/>
</dbReference>
<dbReference type="STRING" id="59463.ENSMLUP00000012384"/>
<dbReference type="GeneID" id="102435069"/>
<dbReference type="KEGG" id="mlf:102435069"/>
<dbReference type="CTD" id="2170"/>
<dbReference type="eggNOG" id="KOG4015">
    <property type="taxonomic scope" value="Eukaryota"/>
</dbReference>
<dbReference type="InParanoid" id="Q865F7"/>
<dbReference type="OrthoDB" id="354351at2759"/>
<dbReference type="Proteomes" id="UP000001074">
    <property type="component" value="Unassembled WGS sequence"/>
</dbReference>
<dbReference type="GO" id="GO:0005737">
    <property type="term" value="C:cytoplasm"/>
    <property type="evidence" value="ECO:0007669"/>
    <property type="project" value="UniProtKB-SubCell"/>
</dbReference>
<dbReference type="GO" id="GO:0008289">
    <property type="term" value="F:lipid binding"/>
    <property type="evidence" value="ECO:0007669"/>
    <property type="project" value="UniProtKB-KW"/>
</dbReference>
<dbReference type="GO" id="GO:0042750">
    <property type="term" value="P:hibernation"/>
    <property type="evidence" value="ECO:0007669"/>
    <property type="project" value="UniProtKB-KW"/>
</dbReference>
<dbReference type="FunFam" id="2.40.128.20:FF:000001">
    <property type="entry name" value="Fatty acid-binding protein, adipocyte"/>
    <property type="match status" value="1"/>
</dbReference>
<dbReference type="Gene3D" id="2.40.128.20">
    <property type="match status" value="1"/>
</dbReference>
<dbReference type="InterPro" id="IPR012674">
    <property type="entry name" value="Calycin"/>
</dbReference>
<dbReference type="InterPro" id="IPR000463">
    <property type="entry name" value="Fatty_acid-bd"/>
</dbReference>
<dbReference type="InterPro" id="IPR031259">
    <property type="entry name" value="ILBP"/>
</dbReference>
<dbReference type="InterPro" id="IPR000566">
    <property type="entry name" value="Lipocln_cytosolic_FA-bd_dom"/>
</dbReference>
<dbReference type="PANTHER" id="PTHR11955">
    <property type="entry name" value="FATTY ACID BINDING PROTEIN"/>
    <property type="match status" value="1"/>
</dbReference>
<dbReference type="Pfam" id="PF00061">
    <property type="entry name" value="Lipocalin"/>
    <property type="match status" value="1"/>
</dbReference>
<dbReference type="PRINTS" id="PR00178">
    <property type="entry name" value="FATTYACIDBP"/>
</dbReference>
<dbReference type="SUPFAM" id="SSF50814">
    <property type="entry name" value="Lipocalins"/>
    <property type="match status" value="1"/>
</dbReference>
<dbReference type="PROSITE" id="PS00214">
    <property type="entry name" value="FABP"/>
    <property type="match status" value="1"/>
</dbReference>
<evidence type="ECO:0000250" key="1"/>
<evidence type="ECO:0000250" key="2">
    <source>
        <dbReference type="UniProtKB" id="P05413"/>
    </source>
</evidence>
<evidence type="ECO:0000250" key="3">
    <source>
        <dbReference type="UniProtKB" id="P07483"/>
    </source>
</evidence>
<evidence type="ECO:0000305" key="4"/>
<name>FABPH_MYOLU</name>
<protein>
    <recommendedName>
        <fullName>Fatty acid-binding protein, heart</fullName>
    </recommendedName>
    <alternativeName>
        <fullName>Fatty acid-binding protein 3</fullName>
    </alternativeName>
    <alternativeName>
        <fullName>Heart-type fatty acid-binding protein</fullName>
        <shortName>H-FABP</shortName>
    </alternativeName>
</protein>
<sequence length="133" mass="14814">MADAFAGTWKLVDSKNFDDYMKSIGVGFATRQVASMTKPTTIIEINGDTIILKTQSTFKNTEISFKLGVELDKTTADDRKVKSTVTLDGGKLVHVQKWDGQETKLVRELVDGKLILTLTHNNVVCTRTYEKEA</sequence>
<feature type="initiator methionine" description="Removed" evidence="3">
    <location>
        <position position="1"/>
    </location>
</feature>
<feature type="chain" id="PRO_0000067323" description="Fatty acid-binding protein, heart">
    <location>
        <begin position="2"/>
        <end position="133"/>
    </location>
</feature>
<feature type="binding site" evidence="2">
    <location>
        <begin position="127"/>
        <end position="129"/>
    </location>
    <ligand>
        <name>(9Z)-octadecenoate</name>
        <dbReference type="ChEBI" id="CHEBI:30823"/>
    </ligand>
</feature>
<feature type="binding site" evidence="2">
    <location>
        <begin position="127"/>
        <end position="129"/>
    </location>
    <ligand>
        <name>hexadecanoate</name>
        <dbReference type="ChEBI" id="CHEBI:7896"/>
    </ligand>
</feature>
<feature type="binding site" evidence="2">
    <location>
        <begin position="127"/>
        <end position="129"/>
    </location>
    <ligand>
        <name>octadecanoate</name>
        <dbReference type="ChEBI" id="CHEBI:25629"/>
    </ligand>
</feature>
<feature type="modified residue" description="N-acetylalanine" evidence="3">
    <location>
        <position position="2"/>
    </location>
</feature>
<feature type="modified residue" description="Phosphothreonine" evidence="3">
    <location>
        <position position="8"/>
    </location>
</feature>
<feature type="modified residue" description="Phosphotyrosine; by Tyr-kinases" evidence="3">
    <location>
        <position position="20"/>
    </location>
</feature>
<feature type="modified residue" description="Phosphoserine" evidence="3">
    <location>
        <position position="23"/>
    </location>
</feature>
<feature type="modified residue" description="Phosphothreonine" evidence="3">
    <location>
        <position position="30"/>
    </location>
</feature>
<feature type="modified residue" description="Phosphoserine" evidence="3">
    <location>
        <position position="83"/>
    </location>
</feature>
<organism>
    <name type="scientific">Myotis lucifugus</name>
    <name type="common">Little brown bat</name>
    <dbReference type="NCBI Taxonomy" id="59463"/>
    <lineage>
        <taxon>Eukaryota</taxon>
        <taxon>Metazoa</taxon>
        <taxon>Chordata</taxon>
        <taxon>Craniata</taxon>
        <taxon>Vertebrata</taxon>
        <taxon>Euteleostomi</taxon>
        <taxon>Mammalia</taxon>
        <taxon>Eutheria</taxon>
        <taxon>Laurasiatheria</taxon>
        <taxon>Chiroptera</taxon>
        <taxon>Yangochiroptera</taxon>
        <taxon>Vespertilionidae</taxon>
        <taxon>Myotis</taxon>
    </lineage>
</organism>
<keyword id="KW-0007">Acetylation</keyword>
<keyword id="KW-0963">Cytoplasm</keyword>
<keyword id="KW-0909">Hibernation</keyword>
<keyword id="KW-0446">Lipid-binding</keyword>
<keyword id="KW-0597">Phosphoprotein</keyword>
<keyword id="KW-1185">Reference proteome</keyword>
<keyword id="KW-0813">Transport</keyword>